<feature type="chain" id="PRO_1000053088" description="Large ribosomal subunit protein uL18">
    <location>
        <begin position="1"/>
        <end position="116"/>
    </location>
</feature>
<comment type="function">
    <text evidence="1">This is one of the proteins that bind and probably mediate the attachment of the 5S RNA into the large ribosomal subunit, where it forms part of the central protuberance.</text>
</comment>
<comment type="subunit">
    <text evidence="1">Part of the 50S ribosomal subunit; part of the 5S rRNA/L5/L18/L25 subcomplex. Contacts the 5S and 23S rRNAs.</text>
</comment>
<comment type="similarity">
    <text evidence="1">Belongs to the universal ribosomal protein uL18 family.</text>
</comment>
<proteinExistence type="inferred from homology"/>
<protein>
    <recommendedName>
        <fullName evidence="1">Large ribosomal subunit protein uL18</fullName>
    </recommendedName>
    <alternativeName>
        <fullName evidence="2">50S ribosomal protein L18</fullName>
    </alternativeName>
</protein>
<gene>
    <name evidence="1" type="primary">rplR</name>
    <name type="ordered locus">Pmen_3893</name>
</gene>
<reference key="1">
    <citation type="submission" date="2007-04" db="EMBL/GenBank/DDBJ databases">
        <title>Complete sequence of Pseudomonas mendocina ymp.</title>
        <authorList>
            <consortium name="US DOE Joint Genome Institute"/>
            <person name="Copeland A."/>
            <person name="Lucas S."/>
            <person name="Lapidus A."/>
            <person name="Barry K."/>
            <person name="Glavina del Rio T."/>
            <person name="Dalin E."/>
            <person name="Tice H."/>
            <person name="Pitluck S."/>
            <person name="Kiss H."/>
            <person name="Brettin T."/>
            <person name="Detter J.C."/>
            <person name="Bruce D."/>
            <person name="Han C."/>
            <person name="Schmutz J."/>
            <person name="Larimer F."/>
            <person name="Land M."/>
            <person name="Hauser L."/>
            <person name="Kyrpides N."/>
            <person name="Mikhailova N."/>
            <person name="Hersman L."/>
            <person name="Dubois J."/>
            <person name="Maurice P."/>
            <person name="Richardson P."/>
        </authorList>
    </citation>
    <scope>NUCLEOTIDE SEQUENCE [LARGE SCALE GENOMIC DNA]</scope>
    <source>
        <strain>ymp</strain>
    </source>
</reference>
<keyword id="KW-0687">Ribonucleoprotein</keyword>
<keyword id="KW-0689">Ribosomal protein</keyword>
<keyword id="KW-0694">RNA-binding</keyword>
<keyword id="KW-0699">rRNA-binding</keyword>
<evidence type="ECO:0000255" key="1">
    <source>
        <dbReference type="HAMAP-Rule" id="MF_01337"/>
    </source>
</evidence>
<evidence type="ECO:0000305" key="2"/>
<sequence length="116" mass="12586">MTDKKVTRLRRARKARLKMHELEAVRLCVYRSSQHIYAQVISADGSKVLASASTLDKALRDGATGNVDAAKKVGQLVAERAKAAGVTQVAFDRSGFKYHGRVKALADAAREGGLEF</sequence>
<accession>A4XZ74</accession>
<organism>
    <name type="scientific">Ectopseudomonas mendocina (strain ymp)</name>
    <name type="common">Pseudomonas mendocina</name>
    <dbReference type="NCBI Taxonomy" id="399739"/>
    <lineage>
        <taxon>Bacteria</taxon>
        <taxon>Pseudomonadati</taxon>
        <taxon>Pseudomonadota</taxon>
        <taxon>Gammaproteobacteria</taxon>
        <taxon>Pseudomonadales</taxon>
        <taxon>Pseudomonadaceae</taxon>
        <taxon>Ectopseudomonas</taxon>
    </lineage>
</organism>
<name>RL18_ECTM1</name>
<dbReference type="EMBL" id="CP000680">
    <property type="protein sequence ID" value="ABP86640.1"/>
    <property type="molecule type" value="Genomic_DNA"/>
</dbReference>
<dbReference type="SMR" id="A4XZ74"/>
<dbReference type="STRING" id="399739.Pmen_3893"/>
<dbReference type="KEGG" id="pmy:Pmen_3893"/>
<dbReference type="eggNOG" id="COG0256">
    <property type="taxonomic scope" value="Bacteria"/>
</dbReference>
<dbReference type="HOGENOM" id="CLU_098841_0_1_6"/>
<dbReference type="OrthoDB" id="9810939at2"/>
<dbReference type="GO" id="GO:0022625">
    <property type="term" value="C:cytosolic large ribosomal subunit"/>
    <property type="evidence" value="ECO:0007669"/>
    <property type="project" value="TreeGrafter"/>
</dbReference>
<dbReference type="GO" id="GO:0008097">
    <property type="term" value="F:5S rRNA binding"/>
    <property type="evidence" value="ECO:0007669"/>
    <property type="project" value="TreeGrafter"/>
</dbReference>
<dbReference type="GO" id="GO:0003735">
    <property type="term" value="F:structural constituent of ribosome"/>
    <property type="evidence" value="ECO:0007669"/>
    <property type="project" value="InterPro"/>
</dbReference>
<dbReference type="GO" id="GO:0006412">
    <property type="term" value="P:translation"/>
    <property type="evidence" value="ECO:0007669"/>
    <property type="project" value="UniProtKB-UniRule"/>
</dbReference>
<dbReference type="CDD" id="cd00432">
    <property type="entry name" value="Ribosomal_L18_L5e"/>
    <property type="match status" value="1"/>
</dbReference>
<dbReference type="FunFam" id="3.30.420.100:FF:000001">
    <property type="entry name" value="50S ribosomal protein L18"/>
    <property type="match status" value="1"/>
</dbReference>
<dbReference type="Gene3D" id="3.30.420.100">
    <property type="match status" value="1"/>
</dbReference>
<dbReference type="HAMAP" id="MF_01337_B">
    <property type="entry name" value="Ribosomal_uL18_B"/>
    <property type="match status" value="1"/>
</dbReference>
<dbReference type="InterPro" id="IPR004389">
    <property type="entry name" value="Ribosomal_uL18_bac-type"/>
</dbReference>
<dbReference type="InterPro" id="IPR005484">
    <property type="entry name" value="Ribosomal_uL18_bac/euk"/>
</dbReference>
<dbReference type="NCBIfam" id="TIGR00060">
    <property type="entry name" value="L18_bact"/>
    <property type="match status" value="1"/>
</dbReference>
<dbReference type="PANTHER" id="PTHR12899">
    <property type="entry name" value="39S RIBOSOMAL PROTEIN L18, MITOCHONDRIAL"/>
    <property type="match status" value="1"/>
</dbReference>
<dbReference type="PANTHER" id="PTHR12899:SF3">
    <property type="entry name" value="LARGE RIBOSOMAL SUBUNIT PROTEIN UL18M"/>
    <property type="match status" value="1"/>
</dbReference>
<dbReference type="Pfam" id="PF00861">
    <property type="entry name" value="Ribosomal_L18p"/>
    <property type="match status" value="1"/>
</dbReference>
<dbReference type="SUPFAM" id="SSF53137">
    <property type="entry name" value="Translational machinery components"/>
    <property type="match status" value="1"/>
</dbReference>